<organism>
    <name type="scientific">Nitrosomonas europaea (strain ATCC 19718 / CIP 103999 / KCTC 2705 / NBRC 14298)</name>
    <dbReference type="NCBI Taxonomy" id="228410"/>
    <lineage>
        <taxon>Bacteria</taxon>
        <taxon>Pseudomonadati</taxon>
        <taxon>Pseudomonadota</taxon>
        <taxon>Betaproteobacteria</taxon>
        <taxon>Nitrosomonadales</taxon>
        <taxon>Nitrosomonadaceae</taxon>
        <taxon>Nitrosomonas</taxon>
    </lineage>
</organism>
<feature type="chain" id="PRO_0000114048" description="Glutamyl-tRNA reductase">
    <location>
        <begin position="1"/>
        <end position="416"/>
    </location>
</feature>
<feature type="active site" description="Nucleophile" evidence="1">
    <location>
        <position position="50"/>
    </location>
</feature>
<feature type="binding site" evidence="1">
    <location>
        <begin position="49"/>
        <end position="52"/>
    </location>
    <ligand>
        <name>substrate</name>
    </ligand>
</feature>
<feature type="binding site" evidence="1">
    <location>
        <position position="105"/>
    </location>
    <ligand>
        <name>substrate</name>
    </ligand>
</feature>
<feature type="binding site" evidence="1">
    <location>
        <begin position="110"/>
        <end position="112"/>
    </location>
    <ligand>
        <name>substrate</name>
    </ligand>
</feature>
<feature type="binding site" evidence="1">
    <location>
        <position position="116"/>
    </location>
    <ligand>
        <name>substrate</name>
    </ligand>
</feature>
<feature type="binding site" evidence="1">
    <location>
        <begin position="185"/>
        <end position="190"/>
    </location>
    <ligand>
        <name>NADP(+)</name>
        <dbReference type="ChEBI" id="CHEBI:58349"/>
    </ligand>
</feature>
<feature type="site" description="Important for activity" evidence="1">
    <location>
        <position position="95"/>
    </location>
</feature>
<accession>Q82TH3</accession>
<keyword id="KW-0521">NADP</keyword>
<keyword id="KW-0560">Oxidoreductase</keyword>
<keyword id="KW-0627">Porphyrin biosynthesis</keyword>
<keyword id="KW-1185">Reference proteome</keyword>
<evidence type="ECO:0000255" key="1">
    <source>
        <dbReference type="HAMAP-Rule" id="MF_00087"/>
    </source>
</evidence>
<name>HEM1_NITEU</name>
<gene>
    <name evidence="1" type="primary">hemA</name>
    <name type="ordered locus">NE1914</name>
</gene>
<proteinExistence type="inferred from homology"/>
<reference key="1">
    <citation type="journal article" date="2003" name="J. Bacteriol.">
        <title>Complete genome sequence of the ammonia-oxidizing bacterium and obligate chemolithoautotroph Nitrosomonas europaea.</title>
        <authorList>
            <person name="Chain P."/>
            <person name="Lamerdin J.E."/>
            <person name="Larimer F.W."/>
            <person name="Regala W."/>
            <person name="Lao V."/>
            <person name="Land M.L."/>
            <person name="Hauser L."/>
            <person name="Hooper A.B."/>
            <person name="Klotz M.G."/>
            <person name="Norton J."/>
            <person name="Sayavedra-Soto L.A."/>
            <person name="Arciero D.M."/>
            <person name="Hommes N.G."/>
            <person name="Whittaker M.M."/>
            <person name="Arp D.J."/>
        </authorList>
    </citation>
    <scope>NUCLEOTIDE SEQUENCE [LARGE SCALE GENOMIC DNA]</scope>
    <source>
        <strain>ATCC 19718 / CIP 103999 / KCTC 2705 / NBRC 14298</strain>
    </source>
</reference>
<protein>
    <recommendedName>
        <fullName evidence="1">Glutamyl-tRNA reductase</fullName>
        <shortName evidence="1">GluTR</shortName>
        <ecNumber evidence="1">1.2.1.70</ecNumber>
    </recommendedName>
</protein>
<sequence>MQLFAFGVNHHTAPLDIREHVAFSEESMQHALHDLVGHQLVKEAAIVSTCNRTEIYCNTDTPDKAVGWLADFHHLRFGDLEPYLYRLLREQAVKHAFRVASGLDSMVLGEPQILGQMKNAVKSAEQAGTLGLLLHKMFQRTFFVAKEVRTSTEIGACSVSMAAASARLAERIFGNISEQKVLFIGAGEMIELCAAHFVARHPVHVTVANRTVERAEALARRFNAHPISLGELPDQLALHDIVVTSTASPLPILGKGMLERAIKQRKHRPVFIVDLAVPRDVEAEVAELDDVFLYYVDDLADIVKEGLDNRQGAVTQAETIIESNVVDFMHWVATRQSVPTIRALRNQAERYRRHELARAHKLLAKGEDPEKVLESLSSGLTNKFLHLPSSVLNHATDDEREQLIELVNRLYQLHHS</sequence>
<dbReference type="EC" id="1.2.1.70" evidence="1"/>
<dbReference type="EMBL" id="AL954747">
    <property type="protein sequence ID" value="CAD85825.1"/>
    <property type="molecule type" value="Genomic_DNA"/>
</dbReference>
<dbReference type="RefSeq" id="WP_011112451.1">
    <property type="nucleotide sequence ID" value="NC_004757.1"/>
</dbReference>
<dbReference type="SMR" id="Q82TH3"/>
<dbReference type="STRING" id="228410.NE1914"/>
<dbReference type="GeneID" id="87105072"/>
<dbReference type="KEGG" id="neu:NE1914"/>
<dbReference type="eggNOG" id="COG0373">
    <property type="taxonomic scope" value="Bacteria"/>
</dbReference>
<dbReference type="HOGENOM" id="CLU_035113_2_2_4"/>
<dbReference type="OrthoDB" id="110209at2"/>
<dbReference type="PhylomeDB" id="Q82TH3"/>
<dbReference type="UniPathway" id="UPA00251">
    <property type="reaction ID" value="UER00316"/>
</dbReference>
<dbReference type="Proteomes" id="UP000001416">
    <property type="component" value="Chromosome"/>
</dbReference>
<dbReference type="GO" id="GO:0008883">
    <property type="term" value="F:glutamyl-tRNA reductase activity"/>
    <property type="evidence" value="ECO:0007669"/>
    <property type="project" value="UniProtKB-UniRule"/>
</dbReference>
<dbReference type="GO" id="GO:0050661">
    <property type="term" value="F:NADP binding"/>
    <property type="evidence" value="ECO:0007669"/>
    <property type="project" value="InterPro"/>
</dbReference>
<dbReference type="GO" id="GO:0019353">
    <property type="term" value="P:protoporphyrinogen IX biosynthetic process from glutamate"/>
    <property type="evidence" value="ECO:0007669"/>
    <property type="project" value="TreeGrafter"/>
</dbReference>
<dbReference type="CDD" id="cd05213">
    <property type="entry name" value="NAD_bind_Glutamyl_tRNA_reduct"/>
    <property type="match status" value="1"/>
</dbReference>
<dbReference type="FunFam" id="3.30.460.30:FF:000001">
    <property type="entry name" value="Glutamyl-tRNA reductase"/>
    <property type="match status" value="1"/>
</dbReference>
<dbReference type="FunFam" id="3.40.50.720:FF:000031">
    <property type="entry name" value="Glutamyl-tRNA reductase"/>
    <property type="match status" value="1"/>
</dbReference>
<dbReference type="Gene3D" id="3.30.460.30">
    <property type="entry name" value="Glutamyl-tRNA reductase, N-terminal domain"/>
    <property type="match status" value="1"/>
</dbReference>
<dbReference type="Gene3D" id="3.40.50.720">
    <property type="entry name" value="NAD(P)-binding Rossmann-like Domain"/>
    <property type="match status" value="1"/>
</dbReference>
<dbReference type="HAMAP" id="MF_00087">
    <property type="entry name" value="Glu_tRNA_reductase"/>
    <property type="match status" value="1"/>
</dbReference>
<dbReference type="InterPro" id="IPR000343">
    <property type="entry name" value="4pyrrol_synth_GluRdtase"/>
</dbReference>
<dbReference type="InterPro" id="IPR015896">
    <property type="entry name" value="4pyrrol_synth_GluRdtase_dimer"/>
</dbReference>
<dbReference type="InterPro" id="IPR015895">
    <property type="entry name" value="4pyrrol_synth_GluRdtase_N"/>
</dbReference>
<dbReference type="InterPro" id="IPR018214">
    <property type="entry name" value="GluRdtase_CS"/>
</dbReference>
<dbReference type="InterPro" id="IPR036453">
    <property type="entry name" value="GluRdtase_dimer_dom_sf"/>
</dbReference>
<dbReference type="InterPro" id="IPR036343">
    <property type="entry name" value="GluRdtase_N_sf"/>
</dbReference>
<dbReference type="InterPro" id="IPR036291">
    <property type="entry name" value="NAD(P)-bd_dom_sf"/>
</dbReference>
<dbReference type="InterPro" id="IPR006151">
    <property type="entry name" value="Shikm_DH/Glu-tRNA_Rdtase"/>
</dbReference>
<dbReference type="NCBIfam" id="TIGR01035">
    <property type="entry name" value="hemA"/>
    <property type="match status" value="1"/>
</dbReference>
<dbReference type="PANTHER" id="PTHR43013">
    <property type="entry name" value="GLUTAMYL-TRNA REDUCTASE"/>
    <property type="match status" value="1"/>
</dbReference>
<dbReference type="PANTHER" id="PTHR43013:SF1">
    <property type="entry name" value="GLUTAMYL-TRNA REDUCTASE"/>
    <property type="match status" value="1"/>
</dbReference>
<dbReference type="Pfam" id="PF00745">
    <property type="entry name" value="GlutR_dimer"/>
    <property type="match status" value="1"/>
</dbReference>
<dbReference type="Pfam" id="PF05201">
    <property type="entry name" value="GlutR_N"/>
    <property type="match status" value="1"/>
</dbReference>
<dbReference type="Pfam" id="PF01488">
    <property type="entry name" value="Shikimate_DH"/>
    <property type="match status" value="1"/>
</dbReference>
<dbReference type="PIRSF" id="PIRSF000445">
    <property type="entry name" value="4pyrrol_synth_GluRdtase"/>
    <property type="match status" value="1"/>
</dbReference>
<dbReference type="SUPFAM" id="SSF69742">
    <property type="entry name" value="Glutamyl tRNA-reductase catalytic, N-terminal domain"/>
    <property type="match status" value="1"/>
</dbReference>
<dbReference type="SUPFAM" id="SSF69075">
    <property type="entry name" value="Glutamyl tRNA-reductase dimerization domain"/>
    <property type="match status" value="1"/>
</dbReference>
<dbReference type="SUPFAM" id="SSF51735">
    <property type="entry name" value="NAD(P)-binding Rossmann-fold domains"/>
    <property type="match status" value="1"/>
</dbReference>
<dbReference type="PROSITE" id="PS00747">
    <property type="entry name" value="GLUTR"/>
    <property type="match status" value="1"/>
</dbReference>
<comment type="function">
    <text evidence="1">Catalyzes the NADPH-dependent reduction of glutamyl-tRNA(Glu) to glutamate 1-semialdehyde (GSA).</text>
</comment>
<comment type="catalytic activity">
    <reaction evidence="1">
        <text>(S)-4-amino-5-oxopentanoate + tRNA(Glu) + NADP(+) = L-glutamyl-tRNA(Glu) + NADPH + H(+)</text>
        <dbReference type="Rhea" id="RHEA:12344"/>
        <dbReference type="Rhea" id="RHEA-COMP:9663"/>
        <dbReference type="Rhea" id="RHEA-COMP:9680"/>
        <dbReference type="ChEBI" id="CHEBI:15378"/>
        <dbReference type="ChEBI" id="CHEBI:57501"/>
        <dbReference type="ChEBI" id="CHEBI:57783"/>
        <dbReference type="ChEBI" id="CHEBI:58349"/>
        <dbReference type="ChEBI" id="CHEBI:78442"/>
        <dbReference type="ChEBI" id="CHEBI:78520"/>
        <dbReference type="EC" id="1.2.1.70"/>
    </reaction>
</comment>
<comment type="pathway">
    <text evidence="1">Porphyrin-containing compound metabolism; protoporphyrin-IX biosynthesis; 5-aminolevulinate from L-glutamyl-tRNA(Glu): step 1/2.</text>
</comment>
<comment type="subunit">
    <text evidence="1">Homodimer.</text>
</comment>
<comment type="domain">
    <text evidence="1">Possesses an unusual extended V-shaped dimeric structure with each monomer consisting of three distinct domains arranged along a curved 'spinal' alpha-helix. The N-terminal catalytic domain specifically recognizes the glutamate moiety of the substrate. The second domain is the NADPH-binding domain, and the third C-terminal domain is responsible for dimerization.</text>
</comment>
<comment type="miscellaneous">
    <text evidence="1">During catalysis, the active site Cys acts as a nucleophile attacking the alpha-carbonyl group of tRNA-bound glutamate with the formation of a thioester intermediate between enzyme and glutamate, and the concomitant release of tRNA(Glu). The thioester intermediate is finally reduced by direct hydride transfer from NADPH, to form the product GSA.</text>
</comment>
<comment type="similarity">
    <text evidence="1">Belongs to the glutamyl-tRNA reductase family.</text>
</comment>